<keyword id="KW-0004">4Fe-4S</keyword>
<keyword id="KW-0010">Activator</keyword>
<keyword id="KW-0963">Cytoplasm</keyword>
<keyword id="KW-0238">DNA-binding</keyword>
<keyword id="KW-0408">Iron</keyword>
<keyword id="KW-0411">Iron-sulfur</keyword>
<keyword id="KW-0479">Metal-binding</keyword>
<keyword id="KW-1185">Reference proteome</keyword>
<keyword id="KW-0678">Repressor</keyword>
<keyword id="KW-0804">Transcription</keyword>
<keyword id="KW-0805">Transcription regulation</keyword>
<accession>P0A2T8</accession>
<accession>P37428</accession>
<accession>P58996</accession>
<gene>
    <name type="primary">fnr</name>
    <name type="synonym">oxrA</name>
    <name type="ordered locus">STM1660</name>
</gene>
<proteinExistence type="inferred from homology"/>
<dbReference type="EMBL" id="U05668">
    <property type="protein sequence ID" value="AAA16268.1"/>
    <property type="molecule type" value="Unassigned_DNA"/>
</dbReference>
<dbReference type="EMBL" id="AE006468">
    <property type="protein sequence ID" value="AAL20578.1"/>
    <property type="status" value="ALT_INIT"/>
    <property type="molecule type" value="Genomic_DNA"/>
</dbReference>
<dbReference type="RefSeq" id="NP_460619.3">
    <property type="nucleotide sequence ID" value="NC_003197.2"/>
</dbReference>
<dbReference type="SMR" id="P0A2T8"/>
<dbReference type="STRING" id="99287.STM1660"/>
<dbReference type="PaxDb" id="99287-STM1660"/>
<dbReference type="GeneID" id="1253178"/>
<dbReference type="KEGG" id="stm:STM1660"/>
<dbReference type="PATRIC" id="fig|99287.12.peg.1754"/>
<dbReference type="HOGENOM" id="CLU_075053_0_2_6"/>
<dbReference type="OMA" id="SICRIHK"/>
<dbReference type="PhylomeDB" id="P0A2T8"/>
<dbReference type="Proteomes" id="UP000001014">
    <property type="component" value="Chromosome"/>
</dbReference>
<dbReference type="CollecTF" id="EXPREG_00000740"/>
<dbReference type="GO" id="GO:0005829">
    <property type="term" value="C:cytosol"/>
    <property type="evidence" value="ECO:0000318"/>
    <property type="project" value="GO_Central"/>
</dbReference>
<dbReference type="GO" id="GO:0032993">
    <property type="term" value="C:protein-DNA complex"/>
    <property type="evidence" value="ECO:0000315"/>
    <property type="project" value="CollecTF"/>
</dbReference>
<dbReference type="GO" id="GO:0051539">
    <property type="term" value="F:4 iron, 4 sulfur cluster binding"/>
    <property type="evidence" value="ECO:0007669"/>
    <property type="project" value="UniProtKB-KW"/>
</dbReference>
<dbReference type="GO" id="GO:0001216">
    <property type="term" value="F:DNA-binding transcription activator activity"/>
    <property type="evidence" value="ECO:0000315"/>
    <property type="project" value="CollecTF"/>
</dbReference>
<dbReference type="GO" id="GO:0003700">
    <property type="term" value="F:DNA-binding transcription factor activity"/>
    <property type="evidence" value="ECO:0000318"/>
    <property type="project" value="GO_Central"/>
</dbReference>
<dbReference type="GO" id="GO:0046872">
    <property type="term" value="F:metal ion binding"/>
    <property type="evidence" value="ECO:0007669"/>
    <property type="project" value="UniProtKB-KW"/>
</dbReference>
<dbReference type="GO" id="GO:0000976">
    <property type="term" value="F:transcription cis-regulatory region binding"/>
    <property type="evidence" value="ECO:0000315"/>
    <property type="project" value="CollecTF"/>
</dbReference>
<dbReference type="GO" id="GO:0045893">
    <property type="term" value="P:positive regulation of DNA-templated transcription"/>
    <property type="evidence" value="ECO:0000270"/>
    <property type="project" value="CollecTF"/>
</dbReference>
<dbReference type="CDD" id="cd00038">
    <property type="entry name" value="CAP_ED"/>
    <property type="match status" value="1"/>
</dbReference>
<dbReference type="CDD" id="cd00092">
    <property type="entry name" value="HTH_CRP"/>
    <property type="match status" value="1"/>
</dbReference>
<dbReference type="FunFam" id="1.10.10.10:FF:000028">
    <property type="entry name" value="Fumarate/nitrate reduction transcriptional regulator Fnr"/>
    <property type="match status" value="1"/>
</dbReference>
<dbReference type="FunFam" id="2.60.120.10:FF:000004">
    <property type="entry name" value="Fumarate/nitrate reduction transcriptional regulator Fnr"/>
    <property type="match status" value="1"/>
</dbReference>
<dbReference type="Gene3D" id="2.60.120.10">
    <property type="entry name" value="Jelly Rolls"/>
    <property type="match status" value="1"/>
</dbReference>
<dbReference type="Gene3D" id="1.10.10.10">
    <property type="entry name" value="Winged helix-like DNA-binding domain superfamily/Winged helix DNA-binding domain"/>
    <property type="match status" value="1"/>
</dbReference>
<dbReference type="InterPro" id="IPR000595">
    <property type="entry name" value="cNMP-bd_dom"/>
</dbReference>
<dbReference type="InterPro" id="IPR018490">
    <property type="entry name" value="cNMP-bd_dom_sf"/>
</dbReference>
<dbReference type="InterPro" id="IPR050397">
    <property type="entry name" value="Env_Response_Regulators"/>
</dbReference>
<dbReference type="InterPro" id="IPR012318">
    <property type="entry name" value="HTH_CRP"/>
</dbReference>
<dbReference type="InterPro" id="IPR014710">
    <property type="entry name" value="RmlC-like_jellyroll"/>
</dbReference>
<dbReference type="InterPro" id="IPR018335">
    <property type="entry name" value="Tscrpt_reg_HTH_Crp-type_CS"/>
</dbReference>
<dbReference type="InterPro" id="IPR036388">
    <property type="entry name" value="WH-like_DNA-bd_sf"/>
</dbReference>
<dbReference type="InterPro" id="IPR036390">
    <property type="entry name" value="WH_DNA-bd_sf"/>
</dbReference>
<dbReference type="NCBIfam" id="NF008365">
    <property type="entry name" value="PRK11161.1"/>
    <property type="match status" value="1"/>
</dbReference>
<dbReference type="PANTHER" id="PTHR24567">
    <property type="entry name" value="CRP FAMILY TRANSCRIPTIONAL REGULATORY PROTEIN"/>
    <property type="match status" value="1"/>
</dbReference>
<dbReference type="PANTHER" id="PTHR24567:SF75">
    <property type="entry name" value="FUMARATE AND NITRATE REDUCTION REGULATORY PROTEIN"/>
    <property type="match status" value="1"/>
</dbReference>
<dbReference type="Pfam" id="PF00027">
    <property type="entry name" value="cNMP_binding"/>
    <property type="match status" value="1"/>
</dbReference>
<dbReference type="Pfam" id="PF13545">
    <property type="entry name" value="HTH_Crp_2"/>
    <property type="match status" value="1"/>
</dbReference>
<dbReference type="PRINTS" id="PR00034">
    <property type="entry name" value="HTHCRP"/>
</dbReference>
<dbReference type="SMART" id="SM00100">
    <property type="entry name" value="cNMP"/>
    <property type="match status" value="1"/>
</dbReference>
<dbReference type="SMART" id="SM00419">
    <property type="entry name" value="HTH_CRP"/>
    <property type="match status" value="1"/>
</dbReference>
<dbReference type="SUPFAM" id="SSF51206">
    <property type="entry name" value="cAMP-binding domain-like"/>
    <property type="match status" value="1"/>
</dbReference>
<dbReference type="SUPFAM" id="SSF46785">
    <property type="entry name" value="Winged helix' DNA-binding domain"/>
    <property type="match status" value="1"/>
</dbReference>
<dbReference type="PROSITE" id="PS50042">
    <property type="entry name" value="CNMP_BINDING_3"/>
    <property type="match status" value="1"/>
</dbReference>
<dbReference type="PROSITE" id="PS00042">
    <property type="entry name" value="HTH_CRP_1"/>
    <property type="match status" value="1"/>
</dbReference>
<dbReference type="PROSITE" id="PS51063">
    <property type="entry name" value="HTH_CRP_2"/>
    <property type="match status" value="1"/>
</dbReference>
<evidence type="ECO:0000250" key="1"/>
<evidence type="ECO:0000255" key="2"/>
<evidence type="ECO:0000255" key="3">
    <source>
        <dbReference type="PROSITE-ProRule" id="PRU00387"/>
    </source>
</evidence>
<evidence type="ECO:0000305" key="4"/>
<name>FNR_SALTY</name>
<sequence length="250" mass="27883">MIPEKRIIRRIQSGGCAIHCQDCSISQLCIPFTLNEHELDQLDNIIERKKPIQKGQTLFKAGDELKSLYAIRSGTIKSYTITEQGDEQITGFHLAGDLVGFDAIGSGHHPSFAQALETSMVCEIPFETLDDLSGKMPNLRQQMMRLMSGEIKGDQDMILLLSKKNAEERLAAFIYNLSRRFAQRGFSPREFRLTMTRGDIGNYLGLTVETISRLLGRFQKSGMLAVKGKYITIENSDALAALAGHTRNVA</sequence>
<organism>
    <name type="scientific">Salmonella typhimurium (strain LT2 / SGSC1412 / ATCC 700720)</name>
    <dbReference type="NCBI Taxonomy" id="99287"/>
    <lineage>
        <taxon>Bacteria</taxon>
        <taxon>Pseudomonadati</taxon>
        <taxon>Pseudomonadota</taxon>
        <taxon>Gammaproteobacteria</taxon>
        <taxon>Enterobacterales</taxon>
        <taxon>Enterobacteriaceae</taxon>
        <taxon>Salmonella</taxon>
    </lineage>
</organism>
<reference key="1">
    <citation type="journal article" date="1997" name="J. Bacteriol.">
        <title>Regulation of the Salmonella typhimurium pepT gene by cyclic AMP receptor protein (CRP) and FNR acting at a hybrid CRP-FNR site.</title>
        <authorList>
            <person name="Lombardo M.-J."/>
            <person name="Lee A.A."/>
            <person name="Knox T.M."/>
            <person name="Miller C.G."/>
        </authorList>
    </citation>
    <scope>NUCLEOTIDE SEQUENCE [GENOMIC DNA]</scope>
</reference>
<reference key="2">
    <citation type="journal article" date="2001" name="Nature">
        <title>Complete genome sequence of Salmonella enterica serovar Typhimurium LT2.</title>
        <authorList>
            <person name="McClelland M."/>
            <person name="Sanderson K.E."/>
            <person name="Spieth J."/>
            <person name="Clifton S.W."/>
            <person name="Latreille P."/>
            <person name="Courtney L."/>
            <person name="Porwollik S."/>
            <person name="Ali J."/>
            <person name="Dante M."/>
            <person name="Du F."/>
            <person name="Hou S."/>
            <person name="Layman D."/>
            <person name="Leonard S."/>
            <person name="Nguyen C."/>
            <person name="Scott K."/>
            <person name="Holmes A."/>
            <person name="Grewal N."/>
            <person name="Mulvaney E."/>
            <person name="Ryan E."/>
            <person name="Sun H."/>
            <person name="Florea L."/>
            <person name="Miller W."/>
            <person name="Stoneking T."/>
            <person name="Nhan M."/>
            <person name="Waterston R."/>
            <person name="Wilson R.K."/>
        </authorList>
    </citation>
    <scope>NUCLEOTIDE SEQUENCE [LARGE SCALE GENOMIC DNA]</scope>
    <source>
        <strain>LT2 / SGSC1412 / ATCC 700720</strain>
    </source>
</reference>
<protein>
    <recommendedName>
        <fullName>Fumarate and nitrate reduction regulatory protein</fullName>
    </recommendedName>
</protein>
<feature type="chain" id="PRO_0000100167" description="Fumarate and nitrate reduction regulatory protein">
    <location>
        <begin position="1"/>
        <end position="250"/>
    </location>
</feature>
<feature type="domain" description="HTH crp-type" evidence="3">
    <location>
        <begin position="164"/>
        <end position="237"/>
    </location>
</feature>
<feature type="DNA-binding region" description="H-T-H motif" evidence="3">
    <location>
        <begin position="197"/>
        <end position="216"/>
    </location>
</feature>
<feature type="region of interest" description="Essential for the oxygen-regulated activity" evidence="1">
    <location>
        <begin position="20"/>
        <end position="29"/>
    </location>
</feature>
<feature type="region of interest" description="Activating region 2A" evidence="2">
    <location>
        <begin position="47"/>
        <end position="50"/>
    </location>
</feature>
<feature type="region of interest" description="Activating region 3A" evidence="2">
    <location>
        <begin position="60"/>
        <end position="61"/>
    </location>
</feature>
<feature type="region of interest" description="Activating region 1A" evidence="2">
    <location>
        <begin position="71"/>
        <end position="75"/>
    </location>
</feature>
<feature type="region of interest" description="Activating region 3B" evidence="2">
    <location>
        <position position="81"/>
    </location>
</feature>
<feature type="region of interest" description="Activating region 3C" evidence="2">
    <location>
        <begin position="85"/>
        <end position="87"/>
    </location>
</feature>
<feature type="region of interest" description="Activating region 3D" evidence="2">
    <location>
        <position position="112"/>
    </location>
</feature>
<feature type="region of interest" description="Activating region 1B" evidence="2">
    <location>
        <begin position="116"/>
        <end position="121"/>
    </location>
</feature>
<feature type="region of interest" description="Activating region 2B" evidence="2">
    <location>
        <begin position="123"/>
        <end position="124"/>
    </location>
</feature>
<feature type="region of interest" description="Activating region 2C" evidence="2">
    <location>
        <begin position="127"/>
        <end position="128"/>
    </location>
</feature>
<feature type="region of interest" description="Dimerization" evidence="2">
    <location>
        <begin position="140"/>
        <end position="159"/>
    </location>
</feature>
<feature type="region of interest" description="Activating region 1C" evidence="2">
    <location>
        <begin position="181"/>
        <end position="191"/>
    </location>
</feature>
<feature type="binding site" evidence="2">
    <location>
        <position position="20"/>
    </location>
    <ligand>
        <name>[4Fe-4S] cluster</name>
        <dbReference type="ChEBI" id="CHEBI:49883"/>
    </ligand>
</feature>
<feature type="binding site" evidence="2">
    <location>
        <position position="23"/>
    </location>
    <ligand>
        <name>[4Fe-4S] cluster</name>
        <dbReference type="ChEBI" id="CHEBI:49883"/>
    </ligand>
</feature>
<feature type="binding site" evidence="2">
    <location>
        <position position="29"/>
    </location>
    <ligand>
        <name>[4Fe-4S] cluster</name>
        <dbReference type="ChEBI" id="CHEBI:49883"/>
    </ligand>
</feature>
<feature type="binding site" evidence="2">
    <location>
        <position position="122"/>
    </location>
    <ligand>
        <name>[4Fe-4S] cluster</name>
        <dbReference type="ChEBI" id="CHEBI:49883"/>
    </ligand>
</feature>
<comment type="function">
    <text evidence="1">Global transcription factor that controls the expression of over 100 target genes in response to anoxia. It facilitates the adaptation to anaerobic growth conditions by regulating the expression of gene products that are involved in anaerobic energy metabolism. When the terminal electron acceptor, O(2), is no longer available, it represses the synthesis of enzymes involved in aerobic respiration and increases the synthesis of enzymes required for anaerobic respiration (By similarity).</text>
</comment>
<comment type="cofactor">
    <cofactor evidence="1">
        <name>[4Fe-4S] cluster</name>
        <dbReference type="ChEBI" id="CHEBI:49883"/>
    </cofactor>
    <text evidence="1">Binds 1 [4Fe-4S] cluster per subunit.</text>
</comment>
<comment type="subunit">
    <text evidence="1">Homodimer.</text>
</comment>
<comment type="subcellular location">
    <subcellularLocation>
        <location evidence="4">Cytoplasm</location>
    </subcellularLocation>
</comment>
<comment type="sequence caution" evidence="4">
    <conflict type="erroneous initiation">
        <sequence resource="EMBL-CDS" id="AAL20578"/>
    </conflict>
</comment>